<comment type="function">
    <text evidence="1">Catalyzes the NADPH-dependent reduction of L-glutamate 5-phosphate into L-glutamate 5-semialdehyde and phosphate. The product spontaneously undergoes cyclization to form 1-pyrroline-5-carboxylate.</text>
</comment>
<comment type="catalytic activity">
    <reaction evidence="1">
        <text>L-glutamate 5-semialdehyde + phosphate + NADP(+) = L-glutamyl 5-phosphate + NADPH + H(+)</text>
        <dbReference type="Rhea" id="RHEA:19541"/>
        <dbReference type="ChEBI" id="CHEBI:15378"/>
        <dbReference type="ChEBI" id="CHEBI:43474"/>
        <dbReference type="ChEBI" id="CHEBI:57783"/>
        <dbReference type="ChEBI" id="CHEBI:58066"/>
        <dbReference type="ChEBI" id="CHEBI:58274"/>
        <dbReference type="ChEBI" id="CHEBI:58349"/>
        <dbReference type="EC" id="1.2.1.41"/>
    </reaction>
</comment>
<comment type="pathway">
    <text evidence="1">Amino-acid biosynthesis; L-proline biosynthesis; L-glutamate 5-semialdehyde from L-glutamate: step 2/2.</text>
</comment>
<comment type="subcellular location">
    <subcellularLocation>
        <location evidence="1">Cytoplasm</location>
    </subcellularLocation>
</comment>
<comment type="similarity">
    <text evidence="1">Belongs to the gamma-glutamyl phosphate reductase family.</text>
</comment>
<accession>A4VR07</accession>
<protein>
    <recommendedName>
        <fullName evidence="1">Gamma-glutamyl phosphate reductase</fullName>
        <shortName evidence="1">GPR</shortName>
        <ecNumber evidence="1">1.2.1.41</ecNumber>
    </recommendedName>
    <alternativeName>
        <fullName evidence="1">Glutamate-5-semialdehyde dehydrogenase</fullName>
    </alternativeName>
    <alternativeName>
        <fullName evidence="1">Glutamyl-gamma-semialdehyde dehydrogenase</fullName>
        <shortName evidence="1">GSA dehydrogenase</shortName>
    </alternativeName>
</protein>
<feature type="chain" id="PRO_1000049986" description="Gamma-glutamyl phosphate reductase">
    <location>
        <begin position="1"/>
        <end position="421"/>
    </location>
</feature>
<gene>
    <name evidence="1" type="primary">proA</name>
    <name type="ordered locus">PST_3785</name>
</gene>
<keyword id="KW-0028">Amino-acid biosynthesis</keyword>
<keyword id="KW-0963">Cytoplasm</keyword>
<keyword id="KW-0521">NADP</keyword>
<keyword id="KW-0560">Oxidoreductase</keyword>
<keyword id="KW-0641">Proline biosynthesis</keyword>
<keyword id="KW-1185">Reference proteome</keyword>
<evidence type="ECO:0000255" key="1">
    <source>
        <dbReference type="HAMAP-Rule" id="MF_00412"/>
    </source>
</evidence>
<dbReference type="EC" id="1.2.1.41" evidence="1"/>
<dbReference type="EMBL" id="CP000304">
    <property type="protein sequence ID" value="ABP81408.1"/>
    <property type="molecule type" value="Genomic_DNA"/>
</dbReference>
<dbReference type="RefSeq" id="WP_011914793.1">
    <property type="nucleotide sequence ID" value="NC_009434.1"/>
</dbReference>
<dbReference type="SMR" id="A4VR07"/>
<dbReference type="KEGG" id="psa:PST_3785"/>
<dbReference type="eggNOG" id="COG0014">
    <property type="taxonomic scope" value="Bacteria"/>
</dbReference>
<dbReference type="HOGENOM" id="CLU_030231_0_0_6"/>
<dbReference type="UniPathway" id="UPA00098">
    <property type="reaction ID" value="UER00360"/>
</dbReference>
<dbReference type="Proteomes" id="UP000000233">
    <property type="component" value="Chromosome"/>
</dbReference>
<dbReference type="GO" id="GO:0005737">
    <property type="term" value="C:cytoplasm"/>
    <property type="evidence" value="ECO:0007669"/>
    <property type="project" value="UniProtKB-SubCell"/>
</dbReference>
<dbReference type="GO" id="GO:0004350">
    <property type="term" value="F:glutamate-5-semialdehyde dehydrogenase activity"/>
    <property type="evidence" value="ECO:0007669"/>
    <property type="project" value="UniProtKB-UniRule"/>
</dbReference>
<dbReference type="GO" id="GO:0050661">
    <property type="term" value="F:NADP binding"/>
    <property type="evidence" value="ECO:0007669"/>
    <property type="project" value="InterPro"/>
</dbReference>
<dbReference type="GO" id="GO:0055129">
    <property type="term" value="P:L-proline biosynthetic process"/>
    <property type="evidence" value="ECO:0007669"/>
    <property type="project" value="UniProtKB-UniRule"/>
</dbReference>
<dbReference type="CDD" id="cd07079">
    <property type="entry name" value="ALDH_F18-19_ProA-GPR"/>
    <property type="match status" value="1"/>
</dbReference>
<dbReference type="FunFam" id="3.40.309.10:FF:000006">
    <property type="entry name" value="Gamma-glutamyl phosphate reductase"/>
    <property type="match status" value="1"/>
</dbReference>
<dbReference type="Gene3D" id="3.40.605.10">
    <property type="entry name" value="Aldehyde Dehydrogenase, Chain A, domain 1"/>
    <property type="match status" value="1"/>
</dbReference>
<dbReference type="Gene3D" id="3.40.309.10">
    <property type="entry name" value="Aldehyde Dehydrogenase, Chain A, domain 2"/>
    <property type="match status" value="1"/>
</dbReference>
<dbReference type="HAMAP" id="MF_00412">
    <property type="entry name" value="ProA"/>
    <property type="match status" value="1"/>
</dbReference>
<dbReference type="InterPro" id="IPR016161">
    <property type="entry name" value="Ald_DH/histidinol_DH"/>
</dbReference>
<dbReference type="InterPro" id="IPR016163">
    <property type="entry name" value="Ald_DH_C"/>
</dbReference>
<dbReference type="InterPro" id="IPR016162">
    <property type="entry name" value="Ald_DH_N"/>
</dbReference>
<dbReference type="InterPro" id="IPR015590">
    <property type="entry name" value="Aldehyde_DH_dom"/>
</dbReference>
<dbReference type="InterPro" id="IPR012134">
    <property type="entry name" value="Glu-5-SA_DH"/>
</dbReference>
<dbReference type="InterPro" id="IPR000965">
    <property type="entry name" value="GPR_dom"/>
</dbReference>
<dbReference type="NCBIfam" id="NF001221">
    <property type="entry name" value="PRK00197.1"/>
    <property type="match status" value="1"/>
</dbReference>
<dbReference type="NCBIfam" id="TIGR00407">
    <property type="entry name" value="proA"/>
    <property type="match status" value="1"/>
</dbReference>
<dbReference type="PANTHER" id="PTHR11063:SF8">
    <property type="entry name" value="DELTA-1-PYRROLINE-5-CARBOXYLATE SYNTHASE"/>
    <property type="match status" value="1"/>
</dbReference>
<dbReference type="PANTHER" id="PTHR11063">
    <property type="entry name" value="GLUTAMATE SEMIALDEHYDE DEHYDROGENASE"/>
    <property type="match status" value="1"/>
</dbReference>
<dbReference type="Pfam" id="PF00171">
    <property type="entry name" value="Aldedh"/>
    <property type="match status" value="2"/>
</dbReference>
<dbReference type="PIRSF" id="PIRSF000151">
    <property type="entry name" value="GPR"/>
    <property type="match status" value="1"/>
</dbReference>
<dbReference type="SUPFAM" id="SSF53720">
    <property type="entry name" value="ALDH-like"/>
    <property type="match status" value="1"/>
</dbReference>
<name>PROA_STUS1</name>
<reference key="1">
    <citation type="journal article" date="2008" name="Proc. Natl. Acad. Sci. U.S.A.">
        <title>Nitrogen fixation island and rhizosphere competence traits in the genome of root-associated Pseudomonas stutzeri A1501.</title>
        <authorList>
            <person name="Yan Y."/>
            <person name="Yang J."/>
            <person name="Dou Y."/>
            <person name="Chen M."/>
            <person name="Ping S."/>
            <person name="Peng J."/>
            <person name="Lu W."/>
            <person name="Zhang W."/>
            <person name="Yao Z."/>
            <person name="Li H."/>
            <person name="Liu W."/>
            <person name="He S."/>
            <person name="Geng L."/>
            <person name="Zhang X."/>
            <person name="Yang F."/>
            <person name="Yu H."/>
            <person name="Zhan Y."/>
            <person name="Li D."/>
            <person name="Lin Z."/>
            <person name="Wang Y."/>
            <person name="Elmerich C."/>
            <person name="Lin M."/>
            <person name="Jin Q."/>
        </authorList>
    </citation>
    <scope>NUCLEOTIDE SEQUENCE [LARGE SCALE GENOMIC DNA]</scope>
    <source>
        <strain>A1501</strain>
    </source>
</reference>
<organism>
    <name type="scientific">Stutzerimonas stutzeri (strain A1501)</name>
    <name type="common">Pseudomonas stutzeri</name>
    <dbReference type="NCBI Taxonomy" id="379731"/>
    <lineage>
        <taxon>Bacteria</taxon>
        <taxon>Pseudomonadati</taxon>
        <taxon>Pseudomonadota</taxon>
        <taxon>Gammaproteobacteria</taxon>
        <taxon>Pseudomonadales</taxon>
        <taxon>Pseudomonadaceae</taxon>
        <taxon>Stutzerimonas</taxon>
    </lineage>
</organism>
<sequence>MTESVLDYMTRLGRAAREASRVLARASTAQKNRALQAAAAALDAARDELVRANELDLAGGRANGLDAAMLDRLALTPKVIDGMIEGLRQVATLPDPIGAIRDMRYMPSGIQVGKMRVPLGVVGIIYESRPNVTIDAASLCLKSGNATILRGGSEAIHSNQAIARCIQLGLAEAGLPAAAVQVVDTTDRAAVGALISMPDYVDVIVPRGGKGLIERISRDARVPVIKHLDGICHVYVDLAADVDKAIRIADNAKTQRFAPCNTMETLLVHQGIAEQVLPPLAAIYRDKGVELRGCPRTRALLGNEVLAASEEDWSTEYNAPILSIRMLDSLDEAIEHINRYGSQHTDAIVTENFTDARRFLTEVDSASVMINASTRFADGFEYGLGAEIGISTDKLHARGPVGLEGLTSEKYVVFGDGHVRT</sequence>
<proteinExistence type="inferred from homology"/>